<proteinExistence type="inferred from homology"/>
<sequence>MKQYIFFLALIVLVSTFAEAGKKTEILDKVKKVFSKGIAGVADLNNMSELGCPFIEKWCEDHCESKKQVGKCENFDCSCVKLGGK</sequence>
<keyword id="KW-0025">Alternative splicing</keyword>
<keyword id="KW-1015">Disulfide bond</keyword>
<keyword id="KW-0872">Ion channel impairing toxin</keyword>
<keyword id="KW-0528">Neurotoxin</keyword>
<keyword id="KW-0632">Potassium channel impairing toxin</keyword>
<keyword id="KW-0964">Secreted</keyword>
<keyword id="KW-0732">Signal</keyword>
<keyword id="KW-0800">Toxin</keyword>
<keyword id="KW-1220">Voltage-gated potassium channel impairing toxin</keyword>
<organism>
    <name type="scientific">Lychas mucronatus</name>
    <name type="common">Chinese swimming scorpion</name>
    <dbReference type="NCBI Taxonomy" id="172552"/>
    <lineage>
        <taxon>Eukaryota</taxon>
        <taxon>Metazoa</taxon>
        <taxon>Ecdysozoa</taxon>
        <taxon>Arthropoda</taxon>
        <taxon>Chelicerata</taxon>
        <taxon>Arachnida</taxon>
        <taxon>Scorpiones</taxon>
        <taxon>Buthida</taxon>
        <taxon>Buthoidea</taxon>
        <taxon>Buthidae</taxon>
        <taxon>Lychas</taxon>
    </lineage>
</organism>
<name>KBX27_LYCMC</name>
<accession>C6ZH27</accession>
<accession>C6ZH28</accession>
<evidence type="ECO:0000250" key="1">
    <source>
        <dbReference type="UniProtKB" id="P0CI42"/>
    </source>
</evidence>
<evidence type="ECO:0000255" key="2"/>
<evidence type="ECO:0000255" key="3">
    <source>
        <dbReference type="PROSITE-ProRule" id="PRU01209"/>
    </source>
</evidence>
<evidence type="ECO:0000305" key="4"/>
<protein>
    <recommendedName>
        <fullName>Neurotoxin beta-KTx 17</fullName>
    </recommendedName>
    <alternativeName>
        <fullName>Neurotoxin KTx6</fullName>
    </alternativeName>
</protein>
<dbReference type="EMBL" id="EU877535">
    <property type="protein sequence ID" value="ACJ63719.1"/>
    <property type="molecule type" value="Genomic_DNA"/>
</dbReference>
<dbReference type="EMBL" id="EU877536">
    <property type="protein sequence ID" value="ACJ63720.1"/>
    <property type="molecule type" value="Genomic_DNA"/>
</dbReference>
<dbReference type="SMR" id="C6ZH27"/>
<dbReference type="GO" id="GO:0005576">
    <property type="term" value="C:extracellular region"/>
    <property type="evidence" value="ECO:0007669"/>
    <property type="project" value="UniProtKB-SubCell"/>
</dbReference>
<dbReference type="GO" id="GO:0015459">
    <property type="term" value="F:potassium channel regulator activity"/>
    <property type="evidence" value="ECO:0007669"/>
    <property type="project" value="UniProtKB-KW"/>
</dbReference>
<dbReference type="GO" id="GO:0090729">
    <property type="term" value="F:toxin activity"/>
    <property type="evidence" value="ECO:0007669"/>
    <property type="project" value="UniProtKB-KW"/>
</dbReference>
<dbReference type="InterPro" id="IPR029237">
    <property type="entry name" value="Long_scorpion_toxin_alpha/beta"/>
</dbReference>
<dbReference type="Pfam" id="PF14866">
    <property type="entry name" value="Scorpion_toxin_alpha-beta"/>
    <property type="match status" value="1"/>
</dbReference>
<dbReference type="PROSITE" id="PS51862">
    <property type="entry name" value="BSPN_CSAB"/>
    <property type="match status" value="1"/>
</dbReference>
<feature type="signal peptide" evidence="2">
    <location>
        <begin position="1"/>
        <end position="20"/>
    </location>
</feature>
<feature type="propeptide" id="PRO_0000403852" evidence="1">
    <location>
        <begin position="21"/>
        <end position="37"/>
    </location>
</feature>
<feature type="chain" id="PRO_0000403853" description="Neurotoxin beta-KTx 17" evidence="1">
    <location>
        <begin position="38"/>
        <end position="85"/>
    </location>
</feature>
<feature type="domain" description="BetaSPN-type CS-alpha/beta" evidence="3">
    <location>
        <begin position="49"/>
        <end position="85"/>
    </location>
</feature>
<feature type="disulfide bond" evidence="3">
    <location>
        <begin position="52"/>
        <end position="72"/>
    </location>
</feature>
<feature type="disulfide bond" evidence="3">
    <location>
        <begin position="59"/>
        <end position="77"/>
    </location>
</feature>
<feature type="disulfide bond" evidence="3">
    <location>
        <begin position="63"/>
        <end position="79"/>
    </location>
</feature>
<feature type="splice variant" id="VSP_040457" description="In isoform 2." evidence="4">
    <location>
        <begin position="37"/>
        <end position="39"/>
    </location>
</feature>
<comment type="function">
    <molecule>Isoform 1</molecule>
    <text evidence="1">Has a very weak effect to block voltage-gated potassium channel Kv1.1/KCNA1.</text>
</comment>
<comment type="function">
    <molecule>Isoform 2</molecule>
    <text evidence="1">Has a very weak effect to block voltage-gated potassium channel Kv1.1/KCNA1.</text>
</comment>
<comment type="subcellular location">
    <subcellularLocation>
        <location evidence="4">Secreted</location>
    </subcellularLocation>
</comment>
<comment type="alternative products">
    <event type="alternative splicing"/>
    <isoform>
        <id>C6ZH27-1</id>
        <name>1</name>
        <sequence type="displayed"/>
    </isoform>
    <isoform>
        <id>C6ZH27-2</id>
        <name>2</name>
        <sequence type="described" ref="VSP_040457"/>
    </isoform>
</comment>
<comment type="tissue specificity">
    <text evidence="4">Expressed by the venom gland.</text>
</comment>
<comment type="similarity">
    <text evidence="4">Belongs to the long chain scorpion toxin family. Class 2 subfamily.</text>
</comment>
<reference key="1">
    <citation type="submission" date="2008-07" db="EMBL/GenBank/DDBJ databases">
        <title>Alternative splicing contributes to diversity of scorpion venom peptides.</title>
        <authorList>
            <person name="Ma Y."/>
            <person name="Cao Z.-J."/>
            <person name="Li W.-X."/>
        </authorList>
    </citation>
    <scope>NUCLEOTIDE SEQUENCE [GENOMIC DNA] (ISOFORMS 1 AND 2)</scope>
    <source>
        <strain>Hainan</strain>
    </source>
</reference>
<reference key="2">
    <citation type="journal article" date="2010" name="BMC Genomics">
        <title>Comparative venom gland transcriptome analysis of the scorpion Lychas mucronatus reveals intraspecific toxic gene diversity and new venomous components.</title>
        <authorList>
            <person name="Zhao R."/>
            <person name="Ma Y."/>
            <person name="He Y."/>
            <person name="Di Z."/>
            <person name="Wu Y.-L."/>
            <person name="Cao Z.-J."/>
            <person name="Li W.-X."/>
        </authorList>
    </citation>
    <scope>ALTERNATIVE SPLICING</scope>
    <source>
        <strain>Yunnan</strain>
    </source>
</reference>